<dbReference type="EMBL" id="AF222767">
    <property type="protein sequence ID" value="AAF61703.1"/>
    <property type="molecule type" value="mRNA"/>
</dbReference>
<dbReference type="RefSeq" id="NP_776736.1">
    <property type="nucleotide sequence ID" value="NM_174311.2"/>
</dbReference>
<dbReference type="BMRB" id="Q9N179"/>
<dbReference type="SMR" id="Q9N179"/>
<dbReference type="FunCoup" id="Q9N179">
    <property type="interactions" value="1246"/>
</dbReference>
<dbReference type="STRING" id="9913.ENSBTAP00000057035"/>
<dbReference type="PaxDb" id="9913-ENSBTAP00000008765"/>
<dbReference type="GeneID" id="281753"/>
<dbReference type="KEGG" id="bta:281753"/>
<dbReference type="CTD" id="2035"/>
<dbReference type="VEuPathDB" id="HostDB:ENSBTAG00000006667"/>
<dbReference type="eggNOG" id="KOG3527">
    <property type="taxonomic scope" value="Eukaryota"/>
</dbReference>
<dbReference type="InParanoid" id="Q9N179"/>
<dbReference type="OrthoDB" id="6589456at2759"/>
<dbReference type="Reactome" id="R-BTA-6794361">
    <property type="pathway name" value="Neurexins and neuroligins"/>
</dbReference>
<dbReference type="Proteomes" id="UP000009136">
    <property type="component" value="Chromosome 2"/>
</dbReference>
<dbReference type="Bgee" id="ENSBTAG00000006667">
    <property type="expression patterns" value="Expressed in thymus and 108 other cell types or tissues"/>
</dbReference>
<dbReference type="GO" id="GO:0016323">
    <property type="term" value="C:basolateral plasma membrane"/>
    <property type="evidence" value="ECO:0000250"/>
    <property type="project" value="UniProtKB"/>
</dbReference>
<dbReference type="GO" id="GO:0005938">
    <property type="term" value="C:cell cortex"/>
    <property type="evidence" value="ECO:0000250"/>
    <property type="project" value="UniProtKB"/>
</dbReference>
<dbReference type="GO" id="GO:0005856">
    <property type="term" value="C:cytoskeleton"/>
    <property type="evidence" value="ECO:0000318"/>
    <property type="project" value="GO_Central"/>
</dbReference>
<dbReference type="GO" id="GO:0005634">
    <property type="term" value="C:nucleus"/>
    <property type="evidence" value="ECO:0007669"/>
    <property type="project" value="UniProtKB-SubCell"/>
</dbReference>
<dbReference type="GO" id="GO:0005886">
    <property type="term" value="C:plasma membrane"/>
    <property type="evidence" value="ECO:0000318"/>
    <property type="project" value="GO_Central"/>
</dbReference>
<dbReference type="GO" id="GO:0003779">
    <property type="term" value="F:actin binding"/>
    <property type="evidence" value="ECO:0007669"/>
    <property type="project" value="UniProtKB-KW"/>
</dbReference>
<dbReference type="GO" id="GO:0005516">
    <property type="term" value="F:calmodulin binding"/>
    <property type="evidence" value="ECO:0007669"/>
    <property type="project" value="UniProtKB-KW"/>
</dbReference>
<dbReference type="GO" id="GO:0005198">
    <property type="term" value="F:structural molecule activity"/>
    <property type="evidence" value="ECO:0007669"/>
    <property type="project" value="InterPro"/>
</dbReference>
<dbReference type="GO" id="GO:0031032">
    <property type="term" value="P:actomyosin structure organization"/>
    <property type="evidence" value="ECO:0000318"/>
    <property type="project" value="GO_Central"/>
</dbReference>
<dbReference type="GO" id="GO:0051301">
    <property type="term" value="P:cell division"/>
    <property type="evidence" value="ECO:0007669"/>
    <property type="project" value="UniProtKB-KW"/>
</dbReference>
<dbReference type="GO" id="GO:0030866">
    <property type="term" value="P:cortical actin cytoskeleton organization"/>
    <property type="evidence" value="ECO:0007669"/>
    <property type="project" value="InterPro"/>
</dbReference>
<dbReference type="GO" id="GO:1904778">
    <property type="term" value="P:positive regulation of protein localization to cell cortex"/>
    <property type="evidence" value="ECO:0000250"/>
    <property type="project" value="UniProtKB"/>
</dbReference>
<dbReference type="GO" id="GO:0051924">
    <property type="term" value="P:regulation of calcium ion transport"/>
    <property type="evidence" value="ECO:0000250"/>
    <property type="project" value="UniProtKB"/>
</dbReference>
<dbReference type="GO" id="GO:1904478">
    <property type="term" value="P:regulation of intestinal absorption"/>
    <property type="evidence" value="ECO:0000250"/>
    <property type="project" value="UniProtKB"/>
</dbReference>
<dbReference type="CDD" id="cd14473">
    <property type="entry name" value="FERM_B-lobe"/>
    <property type="match status" value="1"/>
</dbReference>
<dbReference type="CDD" id="cd13184">
    <property type="entry name" value="FERM_C_4_1_family"/>
    <property type="match status" value="1"/>
</dbReference>
<dbReference type="CDD" id="cd17105">
    <property type="entry name" value="FERM_F1_EPB41"/>
    <property type="match status" value="1"/>
</dbReference>
<dbReference type="FunFam" id="1.20.80.10:FF:000001">
    <property type="entry name" value="Erythrocyte membrane protein band 4.1"/>
    <property type="match status" value="1"/>
</dbReference>
<dbReference type="FunFam" id="2.30.29.30:FF:000001">
    <property type="entry name" value="Erythrocyte membrane protein band 4.1"/>
    <property type="match status" value="1"/>
</dbReference>
<dbReference type="FunFam" id="3.10.20.90:FF:000002">
    <property type="entry name" value="Erythrocyte protein band 4.1-like 3"/>
    <property type="match status" value="1"/>
</dbReference>
<dbReference type="Gene3D" id="1.20.80.10">
    <property type="match status" value="1"/>
</dbReference>
<dbReference type="Gene3D" id="3.10.20.90">
    <property type="entry name" value="Phosphatidylinositol 3-kinase Catalytic Subunit, Chain A, domain 1"/>
    <property type="match status" value="1"/>
</dbReference>
<dbReference type="Gene3D" id="2.30.29.30">
    <property type="entry name" value="Pleckstrin-homology domain (PH domain)/Phosphotyrosine-binding domain (PTB)"/>
    <property type="match status" value="1"/>
</dbReference>
<dbReference type="InterPro" id="IPR008379">
    <property type="entry name" value="Band_4.1_C"/>
</dbReference>
<dbReference type="InterPro" id="IPR019749">
    <property type="entry name" value="Band_41_domain"/>
</dbReference>
<dbReference type="InterPro" id="IPR021187">
    <property type="entry name" value="EPB4.1_FERM_F1"/>
</dbReference>
<dbReference type="InterPro" id="IPR000798">
    <property type="entry name" value="Ez/rad/moesin-like"/>
</dbReference>
<dbReference type="InterPro" id="IPR014847">
    <property type="entry name" value="FA"/>
</dbReference>
<dbReference type="InterPro" id="IPR014352">
    <property type="entry name" value="FERM/acyl-CoA-bd_prot_sf"/>
</dbReference>
<dbReference type="InterPro" id="IPR035963">
    <property type="entry name" value="FERM_2"/>
</dbReference>
<dbReference type="InterPro" id="IPR019748">
    <property type="entry name" value="FERM_central"/>
</dbReference>
<dbReference type="InterPro" id="IPR019747">
    <property type="entry name" value="FERM_CS"/>
</dbReference>
<dbReference type="InterPro" id="IPR000299">
    <property type="entry name" value="FERM_domain"/>
</dbReference>
<dbReference type="InterPro" id="IPR018979">
    <property type="entry name" value="FERM_N"/>
</dbReference>
<dbReference type="InterPro" id="IPR018980">
    <property type="entry name" value="FERM_PH-like_C"/>
</dbReference>
<dbReference type="InterPro" id="IPR011993">
    <property type="entry name" value="PH-like_dom_sf"/>
</dbReference>
<dbReference type="InterPro" id="IPR007477">
    <property type="entry name" value="SAB_dom"/>
</dbReference>
<dbReference type="InterPro" id="IPR029071">
    <property type="entry name" value="Ubiquitin-like_domsf"/>
</dbReference>
<dbReference type="PANTHER" id="PTHR23280">
    <property type="entry name" value="4.1 G PROTEIN"/>
    <property type="match status" value="1"/>
</dbReference>
<dbReference type="PANTHER" id="PTHR23280:SF12">
    <property type="entry name" value="PROTEIN 4.1"/>
    <property type="match status" value="1"/>
</dbReference>
<dbReference type="Pfam" id="PF05902">
    <property type="entry name" value="4_1_CTD"/>
    <property type="match status" value="1"/>
</dbReference>
<dbReference type="Pfam" id="PF08736">
    <property type="entry name" value="FA"/>
    <property type="match status" value="1"/>
</dbReference>
<dbReference type="Pfam" id="PF09380">
    <property type="entry name" value="FERM_C"/>
    <property type="match status" value="1"/>
</dbReference>
<dbReference type="Pfam" id="PF00373">
    <property type="entry name" value="FERM_M"/>
    <property type="match status" value="1"/>
</dbReference>
<dbReference type="Pfam" id="PF09379">
    <property type="entry name" value="FERM_N"/>
    <property type="match status" value="1"/>
</dbReference>
<dbReference type="Pfam" id="PF04382">
    <property type="entry name" value="SAB"/>
    <property type="match status" value="1"/>
</dbReference>
<dbReference type="PIRSF" id="PIRSF002304">
    <property type="entry name" value="Membrane_skeletal_4_1"/>
    <property type="match status" value="1"/>
</dbReference>
<dbReference type="PRINTS" id="PR00935">
    <property type="entry name" value="BAND41"/>
</dbReference>
<dbReference type="PRINTS" id="PR00661">
    <property type="entry name" value="ERMFAMILY"/>
</dbReference>
<dbReference type="SMART" id="SM00295">
    <property type="entry name" value="B41"/>
    <property type="match status" value="1"/>
</dbReference>
<dbReference type="SMART" id="SM01195">
    <property type="entry name" value="FA"/>
    <property type="match status" value="1"/>
</dbReference>
<dbReference type="SMART" id="SM01196">
    <property type="entry name" value="FERM_C"/>
    <property type="match status" value="1"/>
</dbReference>
<dbReference type="SUPFAM" id="SSF50729">
    <property type="entry name" value="PH domain-like"/>
    <property type="match status" value="1"/>
</dbReference>
<dbReference type="SUPFAM" id="SSF47031">
    <property type="entry name" value="Second domain of FERM"/>
    <property type="match status" value="1"/>
</dbReference>
<dbReference type="SUPFAM" id="SSF54236">
    <property type="entry name" value="Ubiquitin-like"/>
    <property type="match status" value="1"/>
</dbReference>
<dbReference type="PROSITE" id="PS00660">
    <property type="entry name" value="FERM_1"/>
    <property type="match status" value="1"/>
</dbReference>
<dbReference type="PROSITE" id="PS00661">
    <property type="entry name" value="FERM_2"/>
    <property type="match status" value="1"/>
</dbReference>
<dbReference type="PROSITE" id="PS50057">
    <property type="entry name" value="FERM_3"/>
    <property type="match status" value="1"/>
</dbReference>
<name>EPB41_BOVIN</name>
<organism>
    <name type="scientific">Bos taurus</name>
    <name type="common">Bovine</name>
    <dbReference type="NCBI Taxonomy" id="9913"/>
    <lineage>
        <taxon>Eukaryota</taxon>
        <taxon>Metazoa</taxon>
        <taxon>Chordata</taxon>
        <taxon>Craniata</taxon>
        <taxon>Vertebrata</taxon>
        <taxon>Euteleostomi</taxon>
        <taxon>Mammalia</taxon>
        <taxon>Eutheria</taxon>
        <taxon>Laurasiatheria</taxon>
        <taxon>Artiodactyla</taxon>
        <taxon>Ruminantia</taxon>
        <taxon>Pecora</taxon>
        <taxon>Bovidae</taxon>
        <taxon>Bovinae</taxon>
        <taxon>Bos</taxon>
    </lineage>
</organism>
<proteinExistence type="evidence at transcript level"/>
<sequence>MHCKVSLLDDTVYECVVEKHAKGQDLLKRVCEHLNLLEEDYFGLAIWDNATSKTWLDSAKEIKKQVRGVPWNFTFNVKFYPPDPAQLTEDITRYYLCLQLRQDIVSGRLPCSFATLALLGSYTIQSELGDYDPELHGADYVSDFKLAPNQTKELEEKVMELHKSYRSMTPAQADLEFLENAKKLSMYGVDLHKAKDLEGVDIILGVCSSGLLVYKEKLRINRFPWPKVLKISYKRSSFFIKIRPGEQEQYESTIGFKLPSYRAAKKLWKVCVEHHTFFRLTSTDTIPKSKFLALGSKFRYSGRTQAQTRQASALIDRPAPHFERTASKRASRSLDGAAAVEPADRTPRPTSAPAIAPSPAAEGGVPGAPVKKAQKETVQVEVKQEEAPPEDAEPEPSEAWKKKRERLDGENIYIRHSNLMLEDLDKSQEEIKKHHASISELKKNFMESVPEPRPSEWDKRLSTHSPFRTLNINGQIPTGEGPPLVKTQTVTISDTANAVKSEIPTKDVPIVHTETKTITYEAAQTDDSNGDLDPGVLLTAQTITSETTSSTTTTQITKTVKGGISETRIEKRIVITGDADIDHDQVLVQAIKEAKEQHPDMSVTKVVVHQETEISEE</sequence>
<accession>Q9N179</accession>
<evidence type="ECO:0000250" key="1"/>
<evidence type="ECO:0000250" key="2">
    <source>
        <dbReference type="UniProtKB" id="P11171"/>
    </source>
</evidence>
<evidence type="ECO:0000250" key="3">
    <source>
        <dbReference type="UniProtKB" id="P48193"/>
    </source>
</evidence>
<evidence type="ECO:0000255" key="4">
    <source>
        <dbReference type="PROSITE-ProRule" id="PRU00084"/>
    </source>
</evidence>
<evidence type="ECO:0000256" key="5">
    <source>
        <dbReference type="SAM" id="MobiDB-lite"/>
    </source>
</evidence>
<reference key="1">
    <citation type="submission" date="2000-01" db="EMBL/GenBank/DDBJ databases">
        <title>The interaction of bovine red blood cell protein 4.1 with red blood cell membranes.</title>
        <authorList>
            <person name="Saito D."/>
            <person name="Inaba M."/>
            <person name="Koshino I."/>
            <person name="Matsumoto M."/>
            <person name="Ono K."/>
        </authorList>
    </citation>
    <scope>NUCLEOTIDE SEQUENCE [MRNA]</scope>
    <source>
        <strain>Japanese black</strain>
        <tissue>Bone marrow</tissue>
    </source>
</reference>
<gene>
    <name evidence="2" type="primary">EPB41</name>
    <name type="synonym">E41P</name>
</gene>
<protein>
    <recommendedName>
        <fullName>Protein 4.1</fullName>
        <shortName>P4.1</shortName>
    </recommendedName>
    <alternativeName>
        <fullName>4.1R</fullName>
    </alternativeName>
    <alternativeName>
        <fullName>Band 4.1</fullName>
    </alternativeName>
    <alternativeName>
        <fullName evidence="2">Erythrocyte membrane protein band 4.1</fullName>
    </alternativeName>
</protein>
<comment type="function">
    <text evidence="2">Protein 4.1 is a major structural element of the erythrocyte membrane skeleton. It plays a key role in regulating membrane physical properties of mechanical stability and deformability by stabilizing spectrin-actin interaction. Recruits DLG1 to membranes. Required for dynein-dynactin complex and NUMA1 recruitment at the mitotic cell cortex during anaphase.</text>
</comment>
<comment type="subunit">
    <text evidence="2 3">Binds with a high affinity to glycophorin and with lower affinity to band III protein. Associates with the nuclear mitotic apparatus. Binds calmodulin, CPAP and DLG1. Also found to associate with contractile apparatus and tight junctions. Interacts with NUMA1; this interaction is negatively regulated by CDK1 during metaphase and promotes anaphase-specific localization of NUMA1 in symmetrically dividing cells. Interacts with ATP2B1; regulates small intestinal calcium absorption through regulation of membrane expression of ATP2B1 (By similarity).</text>
</comment>
<comment type="subcellular location">
    <subcellularLocation>
        <location evidence="2">Nucleus</location>
    </subcellularLocation>
    <subcellularLocation>
        <location evidence="2">Cytoplasm</location>
        <location evidence="2">Cytoskeleton</location>
    </subcellularLocation>
    <subcellularLocation>
        <location evidence="2">Cytoplasm</location>
        <location evidence="2">Cell cortex</location>
    </subcellularLocation>
</comment>
<comment type="PTM">
    <text evidence="1">Phosphorylated at multiple sites by different protein kinases and each phosphorylation event selectively modulates the protein's functions.</text>
</comment>
<comment type="PTM">
    <text evidence="1">Phosphorylation on Tyr-413 reduces the ability of 4.1 to promote the assembly of the spectrin/actin/4.1 ternary complex.</text>
</comment>
<keyword id="KW-0009">Actin-binding</keyword>
<keyword id="KW-0112">Calmodulin-binding</keyword>
<keyword id="KW-0131">Cell cycle</keyword>
<keyword id="KW-0132">Cell division</keyword>
<keyword id="KW-0963">Cytoplasm</keyword>
<keyword id="KW-0206">Cytoskeleton</keyword>
<keyword id="KW-0498">Mitosis</keyword>
<keyword id="KW-0539">Nucleus</keyword>
<keyword id="KW-0597">Phosphoprotein</keyword>
<keyword id="KW-1185">Reference proteome</keyword>
<keyword id="KW-0813">Transport</keyword>
<feature type="chain" id="PRO_0000219388" description="Protein 4.1">
    <location>
        <begin position="1"/>
        <end position="617"/>
    </location>
</feature>
<feature type="domain" description="FERM" evidence="4">
    <location>
        <begin position="1"/>
        <end position="282"/>
    </location>
</feature>
<feature type="region of interest" description="Disordered" evidence="5">
    <location>
        <begin position="308"/>
        <end position="401"/>
    </location>
</feature>
<feature type="region of interest" description="Spectrin--actin-binding">
    <location>
        <begin position="401"/>
        <end position="466"/>
    </location>
</feature>
<feature type="region of interest" description="C-terminal (CTD)">
    <location>
        <begin position="467"/>
        <end position="617"/>
    </location>
</feature>
<feature type="compositionally biased region" description="Low complexity" evidence="5">
    <location>
        <begin position="348"/>
        <end position="361"/>
    </location>
</feature>
<feature type="compositionally biased region" description="Acidic residues" evidence="5">
    <location>
        <begin position="387"/>
        <end position="396"/>
    </location>
</feature>
<feature type="modified residue" description="Phosphotyrosine" evidence="3">
    <location>
        <position position="13"/>
    </location>
</feature>
<feature type="modified residue" description="Phosphothreonine" evidence="2">
    <location>
        <position position="169"/>
    </location>
</feature>
<feature type="modified residue" description="Phosphoserine" evidence="2">
    <location>
        <position position="312"/>
    </location>
</feature>
<feature type="modified residue" description="Phosphoserine" evidence="2">
    <location>
        <position position="331"/>
    </location>
</feature>
<feature type="modified residue" description="Phosphoserine" evidence="2">
    <location>
        <position position="333"/>
    </location>
</feature>
<feature type="modified residue" description="Phosphotyrosine; by EGFR" evidence="2">
    <location>
        <position position="413"/>
    </location>
</feature>
<feature type="modified residue" description="Phosphoserine" evidence="3">
    <location>
        <position position="417"/>
    </location>
</feature>
<feature type="modified residue" description="Phosphoserine" evidence="2">
    <location>
        <position position="427"/>
    </location>
</feature>
<feature type="modified residue" description="Phosphoserine" evidence="2">
    <location>
        <position position="437"/>
    </location>
</feature>
<feature type="modified residue" description="Phosphoserine" evidence="2">
    <location>
        <position position="462"/>
    </location>
</feature>
<feature type="modified residue" description="Phosphoserine; by CDK1" evidence="2">
    <location>
        <position position="465"/>
    </location>
</feature>
<feature type="modified residue" description="Phosphothreonine" evidence="2">
    <location>
        <position position="489"/>
    </location>
</feature>
<feature type="modified residue" description="Phosphothreonine" evidence="2">
    <location>
        <position position="612"/>
    </location>
</feature>